<proteinExistence type="inferred from homology"/>
<name>ADN3_SCHPO</name>
<evidence type="ECO:0000255" key="1">
    <source>
        <dbReference type="PROSITE-ProRule" id="PRU00126"/>
    </source>
</evidence>
<evidence type="ECO:0000256" key="2">
    <source>
        <dbReference type="SAM" id="MobiDB-lite"/>
    </source>
</evidence>
<evidence type="ECO:0000269" key="3">
    <source>
    </source>
</evidence>
<evidence type="ECO:0000269" key="4">
    <source>
    </source>
</evidence>
<evidence type="ECO:0000305" key="5"/>
<accession>O74522</accession>
<accession>Q9UTW9</accession>
<sequence>MADFMDIEPSSHSAKASQYESSAPASSSLGNSHPNESLDYYIYDYFVKHNFEEAAQAFLRESKIQIPKSSSSTAFSPSNNNAPSPFPPKNSSLASPSKISESISGDRLYNHMSSAPSPNKKEETNVVHANEDISLDKRQSFGSSSLPPSEVSINVPEGFLVEWFNIFWDVFSARVSRVNSTPIQLYDPSTQRQMARPMSNLQASQPVPSSTFSRSAVVPNPSLPLNPSVLQGQVMNNPTIPKGTPSTSIEGAKTSIPPSHAMQNPHNSFPASADRLQKNHPVQSSNFNPYTPAPSITVPPNYIPNTAMMGPSYSSFGDTDPRTYPAGMGPNPTAARNGFYPPTPAQIHQLKAQQQHLQRQSKQMSEPAPINMKSNKDQQLQYVDFRGVGSGADLQKQQWNKSTSAEGLQPNGLVMRNFGDVRHQKLPTSSPPSQHPPVGQIPSQYLPYQAGLKVPGNTPIPVKQVGGMPLQSPLPVSMKPSADDHSRATPTRSVEAPTLPSYAPRHPTQANGSRYMNPSTSRMTPQSPYMQNYYRPHAQMQDQNNMMSYMLSQQKAMEIAKSREMAIQRNTQTLSSGNQPPQQSGPNPNEFSMSMDPANMQQGNHALSDYHMQLMLLEEQNKKRLMMARQEQGTGSLSPQSYMNSRYSVDVGKEHMSMIPNQTAPMIQPNVPVSANSPAQANTPAADSTKSGTIQPTNRNGEGLSYSPHQQFSPSAPQAEKLSRSMSPFVSQQQQLNQPVSNKPDGLTQNKEVTGMPLNKEELTNPAFPQSRTSWMMPQSFDTSSLNAPGAKDSSSFSSLHAQPGKSGIATMGVADNTIRTTERSTFSEIMKDSPSAHASPGAKTSPNASRAPEPTGGTNSISQDTTQSLQMQSNSVNSSSMVDASKSKEKSGGDTSALDSNAKNEPTAAKPISKLEDDALFNDSAGNAFGFSSKTDSNVEMLNDFDFESFLNDAGADSASVYY</sequence>
<keyword id="KW-0130">Cell adhesion</keyword>
<keyword id="KW-0963">Cytoplasm</keyword>
<keyword id="KW-0539">Nucleus</keyword>
<keyword id="KW-0597">Phosphoprotein</keyword>
<keyword id="KW-1185">Reference proteome</keyword>
<keyword id="KW-0804">Transcription</keyword>
<keyword id="KW-0805">Transcription regulation</keyword>
<feature type="chain" id="PRO_0000116893" description="Adhesion defective protein 3">
    <location>
        <begin position="1"/>
        <end position="964"/>
    </location>
</feature>
<feature type="domain" description="LisH" evidence="1">
    <location>
        <begin position="34"/>
        <end position="66"/>
    </location>
</feature>
<feature type="region of interest" description="Disordered" evidence="2">
    <location>
        <begin position="1"/>
        <end position="32"/>
    </location>
</feature>
<feature type="region of interest" description="Disordered" evidence="2">
    <location>
        <begin position="69"/>
        <end position="125"/>
    </location>
</feature>
<feature type="region of interest" description="Disordered" evidence="2">
    <location>
        <begin position="241"/>
        <end position="273"/>
    </location>
</feature>
<feature type="region of interest" description="Disordered" evidence="2">
    <location>
        <begin position="476"/>
        <end position="523"/>
    </location>
</feature>
<feature type="region of interest" description="Disordered" evidence="2">
    <location>
        <begin position="572"/>
        <end position="596"/>
    </location>
</feature>
<feature type="region of interest" description="Disordered" evidence="2">
    <location>
        <begin position="664"/>
        <end position="914"/>
    </location>
</feature>
<feature type="compositionally biased region" description="Low complexity" evidence="2">
    <location>
        <begin position="16"/>
        <end position="32"/>
    </location>
</feature>
<feature type="compositionally biased region" description="Low complexity" evidence="2">
    <location>
        <begin position="69"/>
        <end position="83"/>
    </location>
</feature>
<feature type="compositionally biased region" description="Polar residues" evidence="2">
    <location>
        <begin position="93"/>
        <end position="103"/>
    </location>
</feature>
<feature type="compositionally biased region" description="Polar residues" evidence="2">
    <location>
        <begin position="261"/>
        <end position="270"/>
    </location>
</feature>
<feature type="compositionally biased region" description="Polar residues" evidence="2">
    <location>
        <begin position="508"/>
        <end position="523"/>
    </location>
</feature>
<feature type="compositionally biased region" description="Low complexity" evidence="2">
    <location>
        <begin position="575"/>
        <end position="589"/>
    </location>
</feature>
<feature type="compositionally biased region" description="Polar residues" evidence="2">
    <location>
        <begin position="664"/>
        <end position="700"/>
    </location>
</feature>
<feature type="compositionally biased region" description="Polar residues" evidence="2">
    <location>
        <begin position="707"/>
        <end position="716"/>
    </location>
</feature>
<feature type="compositionally biased region" description="Polar residues" evidence="2">
    <location>
        <begin position="724"/>
        <end position="752"/>
    </location>
</feature>
<feature type="compositionally biased region" description="Polar residues" evidence="2">
    <location>
        <begin position="767"/>
        <end position="801"/>
    </location>
</feature>
<feature type="compositionally biased region" description="Polar residues" evidence="2">
    <location>
        <begin position="818"/>
        <end position="828"/>
    </location>
</feature>
<feature type="compositionally biased region" description="Polar residues" evidence="2">
    <location>
        <begin position="857"/>
        <end position="868"/>
    </location>
</feature>
<feature type="compositionally biased region" description="Low complexity" evidence="2">
    <location>
        <begin position="869"/>
        <end position="885"/>
    </location>
</feature>
<feature type="compositionally biased region" description="Polar residues" evidence="2">
    <location>
        <begin position="894"/>
        <end position="905"/>
    </location>
</feature>
<dbReference type="EMBL" id="CU329672">
    <property type="protein sequence ID" value="CAA19308.2"/>
    <property type="molecule type" value="Genomic_DNA"/>
</dbReference>
<dbReference type="EMBL" id="AB027952">
    <property type="protein sequence ID" value="BAA87256.1"/>
    <property type="molecule type" value="Genomic_DNA"/>
</dbReference>
<dbReference type="PIR" id="T41011">
    <property type="entry name" value="T41011"/>
</dbReference>
<dbReference type="PIR" id="T41547">
    <property type="entry name" value="T41547"/>
</dbReference>
<dbReference type="RefSeq" id="NP_588535.2">
    <property type="nucleotide sequence ID" value="NM_001023523.2"/>
</dbReference>
<dbReference type="SMR" id="O74522"/>
<dbReference type="BioGRID" id="275305">
    <property type="interactions" value="38"/>
</dbReference>
<dbReference type="FunCoup" id="O74522">
    <property type="interactions" value="270"/>
</dbReference>
<dbReference type="STRING" id="284812.O74522"/>
<dbReference type="iPTMnet" id="O74522"/>
<dbReference type="PaxDb" id="4896-SPCC1494.10.1"/>
<dbReference type="EnsemblFungi" id="SPCC1494.10.1">
    <property type="protein sequence ID" value="SPCC1494.10.1:pep"/>
    <property type="gene ID" value="SPCC1494.10"/>
</dbReference>
<dbReference type="GeneID" id="2538721"/>
<dbReference type="KEGG" id="spo:2538721"/>
<dbReference type="PomBase" id="SPCC1494.10">
    <property type="gene designation" value="adn3"/>
</dbReference>
<dbReference type="VEuPathDB" id="FungiDB:SPCC1494.10"/>
<dbReference type="eggNOG" id="ENOG502R28W">
    <property type="taxonomic scope" value="Eukaryota"/>
</dbReference>
<dbReference type="HOGENOM" id="CLU_306979_0_0_1"/>
<dbReference type="InParanoid" id="O74522"/>
<dbReference type="OMA" id="VEWFNIF"/>
<dbReference type="PRO" id="PR:O74522"/>
<dbReference type="Proteomes" id="UP000002485">
    <property type="component" value="Chromosome III"/>
</dbReference>
<dbReference type="GO" id="GO:0032153">
    <property type="term" value="C:cell division site"/>
    <property type="evidence" value="ECO:0007005"/>
    <property type="project" value="PomBase"/>
</dbReference>
<dbReference type="GO" id="GO:0005737">
    <property type="term" value="C:cytoplasm"/>
    <property type="evidence" value="ECO:0007669"/>
    <property type="project" value="UniProtKB-SubCell"/>
</dbReference>
<dbReference type="GO" id="GO:0005634">
    <property type="term" value="C:nucleus"/>
    <property type="evidence" value="ECO:0000318"/>
    <property type="project" value="GO_Central"/>
</dbReference>
<dbReference type="GO" id="GO:0000981">
    <property type="term" value="F:DNA-binding transcription factor activity, RNA polymerase II-specific"/>
    <property type="evidence" value="ECO:0000266"/>
    <property type="project" value="PomBase"/>
</dbReference>
<dbReference type="GO" id="GO:0000978">
    <property type="term" value="F:RNA polymerase II cis-regulatory region sequence-specific DNA binding"/>
    <property type="evidence" value="ECO:0000266"/>
    <property type="project" value="PomBase"/>
</dbReference>
<dbReference type="GO" id="GO:0007155">
    <property type="term" value="P:cell adhesion"/>
    <property type="evidence" value="ECO:0007669"/>
    <property type="project" value="UniProtKB-KW"/>
</dbReference>
<dbReference type="GO" id="GO:0045944">
    <property type="term" value="P:positive regulation of transcription by RNA polymerase II"/>
    <property type="evidence" value="ECO:0000318"/>
    <property type="project" value="GO_Central"/>
</dbReference>
<dbReference type="InterPro" id="IPR006594">
    <property type="entry name" value="LisH"/>
</dbReference>
<dbReference type="PANTHER" id="PTHR12610:SF12">
    <property type="entry name" value="SEQUENCE-SPECIFIC SINGLE-STRANDED DNA-BINDING PROTEIN, ISOFORM D"/>
    <property type="match status" value="1"/>
</dbReference>
<dbReference type="PANTHER" id="PTHR12610">
    <property type="entry name" value="SINGLE STRANDED DNA BINDING PROTEIN"/>
    <property type="match status" value="1"/>
</dbReference>
<dbReference type="Pfam" id="PF08513">
    <property type="entry name" value="LisH"/>
    <property type="match status" value="1"/>
</dbReference>
<dbReference type="SMART" id="SM00667">
    <property type="entry name" value="LisH"/>
    <property type="match status" value="1"/>
</dbReference>
<dbReference type="PROSITE" id="PS50896">
    <property type="entry name" value="LISH"/>
    <property type="match status" value="1"/>
</dbReference>
<organism>
    <name type="scientific">Schizosaccharomyces pombe (strain 972 / ATCC 24843)</name>
    <name type="common">Fission yeast</name>
    <dbReference type="NCBI Taxonomy" id="284812"/>
    <lineage>
        <taxon>Eukaryota</taxon>
        <taxon>Fungi</taxon>
        <taxon>Dikarya</taxon>
        <taxon>Ascomycota</taxon>
        <taxon>Taphrinomycotina</taxon>
        <taxon>Schizosaccharomycetes</taxon>
        <taxon>Schizosaccharomycetales</taxon>
        <taxon>Schizosaccharomycetaceae</taxon>
        <taxon>Schizosaccharomyces</taxon>
    </lineage>
</organism>
<reference key="1">
    <citation type="journal article" date="2002" name="Nature">
        <title>The genome sequence of Schizosaccharomyces pombe.</title>
        <authorList>
            <person name="Wood V."/>
            <person name="Gwilliam R."/>
            <person name="Rajandream M.A."/>
            <person name="Lyne M.H."/>
            <person name="Lyne R."/>
            <person name="Stewart A."/>
            <person name="Sgouros J.G."/>
            <person name="Peat N."/>
            <person name="Hayles J."/>
            <person name="Baker S.G."/>
            <person name="Basham D."/>
            <person name="Bowman S."/>
            <person name="Brooks K."/>
            <person name="Brown D."/>
            <person name="Brown S."/>
            <person name="Chillingworth T."/>
            <person name="Churcher C.M."/>
            <person name="Collins M."/>
            <person name="Connor R."/>
            <person name="Cronin A."/>
            <person name="Davis P."/>
            <person name="Feltwell T."/>
            <person name="Fraser A."/>
            <person name="Gentles S."/>
            <person name="Goble A."/>
            <person name="Hamlin N."/>
            <person name="Harris D.E."/>
            <person name="Hidalgo J."/>
            <person name="Hodgson G."/>
            <person name="Holroyd S."/>
            <person name="Hornsby T."/>
            <person name="Howarth S."/>
            <person name="Huckle E.J."/>
            <person name="Hunt S."/>
            <person name="Jagels K."/>
            <person name="James K.D."/>
            <person name="Jones L."/>
            <person name="Jones M."/>
            <person name="Leather S."/>
            <person name="McDonald S."/>
            <person name="McLean J."/>
            <person name="Mooney P."/>
            <person name="Moule S."/>
            <person name="Mungall K.L."/>
            <person name="Murphy L.D."/>
            <person name="Niblett D."/>
            <person name="Odell C."/>
            <person name="Oliver K."/>
            <person name="O'Neil S."/>
            <person name="Pearson D."/>
            <person name="Quail M.A."/>
            <person name="Rabbinowitsch E."/>
            <person name="Rutherford K.M."/>
            <person name="Rutter S."/>
            <person name="Saunders D."/>
            <person name="Seeger K."/>
            <person name="Sharp S."/>
            <person name="Skelton J."/>
            <person name="Simmonds M.N."/>
            <person name="Squares R."/>
            <person name="Squares S."/>
            <person name="Stevens K."/>
            <person name="Taylor K."/>
            <person name="Taylor R.G."/>
            <person name="Tivey A."/>
            <person name="Walsh S.V."/>
            <person name="Warren T."/>
            <person name="Whitehead S."/>
            <person name="Woodward J.R."/>
            <person name="Volckaert G."/>
            <person name="Aert R."/>
            <person name="Robben J."/>
            <person name="Grymonprez B."/>
            <person name="Weltjens I."/>
            <person name="Vanstreels E."/>
            <person name="Rieger M."/>
            <person name="Schaefer M."/>
            <person name="Mueller-Auer S."/>
            <person name="Gabel C."/>
            <person name="Fuchs M."/>
            <person name="Duesterhoeft A."/>
            <person name="Fritzc C."/>
            <person name="Holzer E."/>
            <person name="Moestl D."/>
            <person name="Hilbert H."/>
            <person name="Borzym K."/>
            <person name="Langer I."/>
            <person name="Beck A."/>
            <person name="Lehrach H."/>
            <person name="Reinhardt R."/>
            <person name="Pohl T.M."/>
            <person name="Eger P."/>
            <person name="Zimmermann W."/>
            <person name="Wedler H."/>
            <person name="Wambutt R."/>
            <person name="Purnelle B."/>
            <person name="Goffeau A."/>
            <person name="Cadieu E."/>
            <person name="Dreano S."/>
            <person name="Gloux S."/>
            <person name="Lelaure V."/>
            <person name="Mottier S."/>
            <person name="Galibert F."/>
            <person name="Aves S.J."/>
            <person name="Xiang Z."/>
            <person name="Hunt C."/>
            <person name="Moore K."/>
            <person name="Hurst S.M."/>
            <person name="Lucas M."/>
            <person name="Rochet M."/>
            <person name="Gaillardin C."/>
            <person name="Tallada V.A."/>
            <person name="Garzon A."/>
            <person name="Thode G."/>
            <person name="Daga R.R."/>
            <person name="Cruzado L."/>
            <person name="Jimenez J."/>
            <person name="Sanchez M."/>
            <person name="del Rey F."/>
            <person name="Benito J."/>
            <person name="Dominguez A."/>
            <person name="Revuelta J.L."/>
            <person name="Moreno S."/>
            <person name="Armstrong J."/>
            <person name="Forsburg S.L."/>
            <person name="Cerutti L."/>
            <person name="Lowe T."/>
            <person name="McCombie W.R."/>
            <person name="Paulsen I."/>
            <person name="Potashkin J."/>
            <person name="Shpakovski G.V."/>
            <person name="Ussery D."/>
            <person name="Barrell B.G."/>
            <person name="Nurse P."/>
        </authorList>
    </citation>
    <scope>NUCLEOTIDE SEQUENCE [LARGE SCALE GENOMIC DNA]</scope>
    <source>
        <strain>972 / ATCC 24843</strain>
    </source>
</reference>
<reference key="2">
    <citation type="journal article" date="2000" name="Genes Cells">
        <title>Large-scale screening of intracellular protein localization in living fission yeast cells by the use of a GFP-fusion genomic DNA library.</title>
        <authorList>
            <person name="Ding D.-Q."/>
            <person name="Tomita Y."/>
            <person name="Yamamoto A."/>
            <person name="Chikashige Y."/>
            <person name="Haraguchi T."/>
            <person name="Hiraoka Y."/>
        </authorList>
    </citation>
    <scope>NUCLEOTIDE SEQUENCE [LARGE SCALE GENOMIC DNA] OF 420-596</scope>
    <scope>SUBCELLULAR LOCATION</scope>
    <source>
        <strain>ATCC 38364 / 968</strain>
    </source>
</reference>
<reference key="3">
    <citation type="journal article" date="2009" name="Eukaryot. Cell">
        <title>Functional genomics of adhesion, invasion, and mycelial formation in Schizosaccharomyces pombe.</title>
        <authorList>
            <person name="Dodgson J."/>
            <person name="Avula H."/>
            <person name="Hoe K.L."/>
            <person name="Kim D.U."/>
            <person name="Park H.O."/>
            <person name="Hayles J."/>
            <person name="Armstrong J."/>
        </authorList>
    </citation>
    <scope>FUNCTION</scope>
</reference>
<protein>
    <recommendedName>
        <fullName>Adhesion defective protein 3</fullName>
    </recommendedName>
    <alternativeName>
        <fullName>LisH domain-containing protein adn3</fullName>
    </alternativeName>
</protein>
<gene>
    <name type="primary">adn3</name>
    <name type="ORF">SPCC1494.10</name>
    <name type="ORF">SPCC70.01</name>
</gene>
<comment type="function">
    <text evidence="4">Probable transcriptional regulator involved in cell adhesion.</text>
</comment>
<comment type="subcellular location">
    <subcellularLocation>
        <location evidence="3">Cytoplasm</location>
    </subcellularLocation>
    <subcellularLocation>
        <location evidence="3">Nucleus</location>
    </subcellularLocation>
</comment>
<comment type="similarity">
    <text evidence="5">Belongs to the FLO8 family.</text>
</comment>